<sequence>MSSKLKYTDIDVPLDWLYKGKRRNRTKSAASTRTSEATTTSVKKTATLPSTAAVPTKTIASPQRPLSGQNVNNELSNSKPAVSAEKVSQQGQVPTRRTRSHSVSYGLLQKKNNNDDTTDSPKISRIRTAQDQPVKETKSSTLAEPIVSKKGRSRSSSISTSLNERSKKSLFGSLFGRRPSTTPSHVVERPLSSQNDHKKSTELPPIDTRQSKISTPTSTPTTASSKPSSSGGNRHSDGSLTSKLLSIPHNILETSSTNFNAHHHIQSHHSSGREQDSPHSESSDLPPILEKETTQKQLQKVSKVNLKRVTIAVQEFNSDPPQQLPSRKPKRGNVLIPEDMISAPPLISLGITNSSDQSSFQSNISPSYSKDSKEYKLALENFKKAAKEAEKHQKDAYYVAERMAQEVANYKARQLKTSPLTGATNSAADSATDQESSSLDARASKLHIDKPINVGAHPFETHQDDNIKYSSHLEQTLDVAYTRCCHLREILPIPSTLRQVKGKTAPLQTLKFLNPKPTLVDILSFCDFIAITPIHNIIFDNVSLTHDMFKIVICSLVTSPVVEKLGLRNVVINEQSWKLLCKFLLQNKTLIKLDISQTKARTDLNDSNYRDQMDWELFCEVLRNREGRPLEELLLNGLRFDKMSFSHFKNILLTFAQMNPKNPIRLGMANVEFSTECFDFLFNWMSEYNVQGVDLAYNNLESLAKRMIKKLARLPYKHLEYFTLNSTNITSVDDMSYILKYLSRLPSIKFLDLSNLPQLFPGILTSGYKYFPQFPQLKRIHFDFDDLSIKETTMLVSILAKCETLSHVSLIGQSPMPDASKISDSTDEPDKSKDEKKEQIVFMRNTLWASLYAFVRDSHNLVSLDVDYDQVPDEIQSRIALCLMHNMKRIMDSSFKLDELTVQDDLIFDGSLITETAEEVLKRLNDKSLLQNDVGKKYLLKKYFEKMEKVHHNVQNTIDSMFEKRKSGELPLQEKENLLRLLLLEKNLSNILDIFASMPNIADVVPFSKADNSFPNIGDSTVSANYNDGIRPSLKHLDSDRLINDVSIPENDSSIRPHLMATDSGRIIDVTTGKALLFKSSSNTSLAGKRQEEEEGELHKWGVFVQHQSSRHNSGLPSSANSSRISGSLTPDSSVAGGKKGESSRTSGTRPKILPKIPTGAELRDAIIKAKGIDSVDDLIKNVTSEKVGLESLYGDELNSRSPSNDSLQESQQKAPLQRPLVEDETVTKKYDKLLNDLSNVRHSKT</sequence>
<dbReference type="EMBL" id="X92441">
    <property type="protein sequence ID" value="CAA63190.1"/>
    <property type="molecule type" value="Genomic_DNA"/>
</dbReference>
<dbReference type="EMBL" id="Z75135">
    <property type="protein sequence ID" value="CAA99447.1"/>
    <property type="molecule type" value="Genomic_DNA"/>
</dbReference>
<dbReference type="EMBL" id="BK006948">
    <property type="protein sequence ID" value="DAA10997.1"/>
    <property type="molecule type" value="Genomic_DNA"/>
</dbReference>
<dbReference type="PIR" id="S60954">
    <property type="entry name" value="S60954"/>
</dbReference>
<dbReference type="RefSeq" id="NP_014870.1">
    <property type="nucleotide sequence ID" value="NM_001183646.1"/>
</dbReference>
<dbReference type="SMR" id="Q12276"/>
<dbReference type="BioGRID" id="34620">
    <property type="interactions" value="64"/>
</dbReference>
<dbReference type="DIP" id="DIP-6547N"/>
<dbReference type="FunCoup" id="Q12276">
    <property type="interactions" value="302"/>
</dbReference>
<dbReference type="IntAct" id="Q12276">
    <property type="interactions" value="11"/>
</dbReference>
<dbReference type="MINT" id="Q12276"/>
<dbReference type="STRING" id="4932.YOR227W"/>
<dbReference type="GlyGen" id="Q12276">
    <property type="glycosylation" value="2 sites, 1 O-linked glycan (2 sites)"/>
</dbReference>
<dbReference type="iPTMnet" id="Q12276"/>
<dbReference type="PaxDb" id="4932-YOR227W"/>
<dbReference type="PeptideAtlas" id="Q12276"/>
<dbReference type="EnsemblFungi" id="YOR227W_mRNA">
    <property type="protein sequence ID" value="YOR227W"/>
    <property type="gene ID" value="YOR227W"/>
</dbReference>
<dbReference type="GeneID" id="854402"/>
<dbReference type="KEGG" id="sce:YOR227W"/>
<dbReference type="AGR" id="SGD:S000005753"/>
<dbReference type="SGD" id="S000005753">
    <property type="gene designation" value="HER1"/>
</dbReference>
<dbReference type="VEuPathDB" id="FungiDB:YOR227W"/>
<dbReference type="eggNOG" id="ENOG502QYHN">
    <property type="taxonomic scope" value="Eukaryota"/>
</dbReference>
<dbReference type="GeneTree" id="ENSGT00940000176518"/>
<dbReference type="HOGENOM" id="CLU_007231_0_0_1"/>
<dbReference type="InParanoid" id="Q12276"/>
<dbReference type="OMA" id="ECPSLCH"/>
<dbReference type="OrthoDB" id="8436363at2759"/>
<dbReference type="BioCyc" id="YEAST:G3O-33725-MONOMER"/>
<dbReference type="BioGRID-ORCS" id="854402">
    <property type="hits" value="7 hits in 10 CRISPR screens"/>
</dbReference>
<dbReference type="PRO" id="PR:Q12276"/>
<dbReference type="Proteomes" id="UP000002311">
    <property type="component" value="Chromosome XV"/>
</dbReference>
<dbReference type="RNAct" id="Q12276">
    <property type="molecule type" value="protein"/>
</dbReference>
<dbReference type="GO" id="GO:0005737">
    <property type="term" value="C:cytoplasm"/>
    <property type="evidence" value="ECO:0007005"/>
    <property type="project" value="SGD"/>
</dbReference>
<dbReference type="GO" id="GO:0005739">
    <property type="term" value="C:mitochondrion"/>
    <property type="evidence" value="ECO:0007005"/>
    <property type="project" value="SGD"/>
</dbReference>
<dbReference type="GO" id="GO:0007029">
    <property type="term" value="P:endoplasmic reticulum organization"/>
    <property type="evidence" value="ECO:0000316"/>
    <property type="project" value="SGD"/>
</dbReference>
<dbReference type="Gene3D" id="3.80.10.10">
    <property type="entry name" value="Ribonuclease Inhibitor"/>
    <property type="match status" value="1"/>
</dbReference>
<dbReference type="InterPro" id="IPR032675">
    <property type="entry name" value="LRR_dom_sf"/>
</dbReference>
<dbReference type="SUPFAM" id="SSF52047">
    <property type="entry name" value="RNI-like"/>
    <property type="match status" value="1"/>
</dbReference>
<name>HER1_YEAST</name>
<gene>
    <name type="primary">HER1</name>
    <name type="ordered locus">YOR227W</name>
    <name type="ORF">YOR50-17</name>
</gene>
<reference key="1">
    <citation type="journal article" date="1996" name="Yeast">
        <title>Sequence and analysis of a 33 kb fragment from the right arm of chromosome XV of the yeast Saccharomyces cerevisiae.</title>
        <authorList>
            <person name="Galisson F."/>
            <person name="Dujon B."/>
        </authorList>
    </citation>
    <scope>NUCLEOTIDE SEQUENCE [GENOMIC DNA]</scope>
    <source>
        <strain>ATCC 96604 / S288c / FY1679</strain>
    </source>
</reference>
<reference key="2">
    <citation type="journal article" date="1997" name="Nature">
        <title>The nucleotide sequence of Saccharomyces cerevisiae chromosome XV.</title>
        <authorList>
            <person name="Dujon B."/>
            <person name="Albermann K."/>
            <person name="Aldea M."/>
            <person name="Alexandraki D."/>
            <person name="Ansorge W."/>
            <person name="Arino J."/>
            <person name="Benes V."/>
            <person name="Bohn C."/>
            <person name="Bolotin-Fukuhara M."/>
            <person name="Bordonne R."/>
            <person name="Boyer J."/>
            <person name="Camasses A."/>
            <person name="Casamayor A."/>
            <person name="Casas C."/>
            <person name="Cheret G."/>
            <person name="Cziepluch C."/>
            <person name="Daignan-Fornier B."/>
            <person name="Dang V.-D."/>
            <person name="de Haan M."/>
            <person name="Delius H."/>
            <person name="Durand P."/>
            <person name="Fairhead C."/>
            <person name="Feldmann H."/>
            <person name="Gaillon L."/>
            <person name="Galisson F."/>
            <person name="Gamo F.-J."/>
            <person name="Gancedo C."/>
            <person name="Goffeau A."/>
            <person name="Goulding S.E."/>
            <person name="Grivell L.A."/>
            <person name="Habbig B."/>
            <person name="Hand N.J."/>
            <person name="Hani J."/>
            <person name="Hattenhorst U."/>
            <person name="Hebling U."/>
            <person name="Hernando Y."/>
            <person name="Herrero E."/>
            <person name="Heumann K."/>
            <person name="Hiesel R."/>
            <person name="Hilger F."/>
            <person name="Hofmann B."/>
            <person name="Hollenberg C.P."/>
            <person name="Hughes B."/>
            <person name="Jauniaux J.-C."/>
            <person name="Kalogeropoulos A."/>
            <person name="Katsoulou C."/>
            <person name="Kordes E."/>
            <person name="Lafuente M.J."/>
            <person name="Landt O."/>
            <person name="Louis E.J."/>
            <person name="Maarse A.C."/>
            <person name="Madania A."/>
            <person name="Mannhaupt G."/>
            <person name="Marck C."/>
            <person name="Martin R.P."/>
            <person name="Mewes H.-W."/>
            <person name="Michaux G."/>
            <person name="Paces V."/>
            <person name="Parle-McDermott A.G."/>
            <person name="Pearson B.M."/>
            <person name="Perrin A."/>
            <person name="Pettersson B."/>
            <person name="Poch O."/>
            <person name="Pohl T.M."/>
            <person name="Poirey R."/>
            <person name="Portetelle D."/>
            <person name="Pujol A."/>
            <person name="Purnelle B."/>
            <person name="Ramezani Rad M."/>
            <person name="Rechmann S."/>
            <person name="Schwager C."/>
            <person name="Schweizer M."/>
            <person name="Sor F."/>
            <person name="Sterky F."/>
            <person name="Tarassov I.A."/>
            <person name="Teodoru C."/>
            <person name="Tettelin H."/>
            <person name="Thierry A."/>
            <person name="Tobiasch E."/>
            <person name="Tzermia M."/>
            <person name="Uhlen M."/>
            <person name="Unseld M."/>
            <person name="Valens M."/>
            <person name="Vandenbol M."/>
            <person name="Vetter I."/>
            <person name="Vlcek C."/>
            <person name="Voet M."/>
            <person name="Volckaert G."/>
            <person name="Voss H."/>
            <person name="Wambutt R."/>
            <person name="Wedler H."/>
            <person name="Wiemann S."/>
            <person name="Winsor B."/>
            <person name="Wolfe K.H."/>
            <person name="Zollner A."/>
            <person name="Zumstein E."/>
            <person name="Kleine K."/>
        </authorList>
    </citation>
    <scope>NUCLEOTIDE SEQUENCE [LARGE SCALE GENOMIC DNA]</scope>
    <source>
        <strain>ATCC 204508 / S288c</strain>
    </source>
</reference>
<reference key="3">
    <citation type="journal article" date="2014" name="G3 (Bethesda)">
        <title>The reference genome sequence of Saccharomyces cerevisiae: Then and now.</title>
        <authorList>
            <person name="Engel S.R."/>
            <person name="Dietrich F.S."/>
            <person name="Fisk D.G."/>
            <person name="Binkley G."/>
            <person name="Balakrishnan R."/>
            <person name="Costanzo M.C."/>
            <person name="Dwight S.S."/>
            <person name="Hitz B.C."/>
            <person name="Karra K."/>
            <person name="Nash R.S."/>
            <person name="Weng S."/>
            <person name="Wong E.D."/>
            <person name="Lloyd P."/>
            <person name="Skrzypek M.S."/>
            <person name="Miyasato S.R."/>
            <person name="Simison M."/>
            <person name="Cherry J.M."/>
        </authorList>
    </citation>
    <scope>GENOME REANNOTATION</scope>
    <source>
        <strain>ATCC 204508 / S288c</strain>
    </source>
</reference>
<reference key="4">
    <citation type="journal article" date="2003" name="Nature">
        <title>Global analysis of protein localization in budding yeast.</title>
        <authorList>
            <person name="Huh W.-K."/>
            <person name="Falvo J.V."/>
            <person name="Gerke L.C."/>
            <person name="Carroll A.S."/>
            <person name="Howson R.W."/>
            <person name="Weissman J.S."/>
            <person name="O'Shea E.K."/>
        </authorList>
    </citation>
    <scope>SUBCELLULAR LOCATION [LARGE SCALE ANALYSIS]</scope>
</reference>
<reference key="5">
    <citation type="journal article" date="2003" name="Nature">
        <title>Global analysis of protein expression in yeast.</title>
        <authorList>
            <person name="Ghaemmaghami S."/>
            <person name="Huh W.-K."/>
            <person name="Bower K."/>
            <person name="Howson R.W."/>
            <person name="Belle A."/>
            <person name="Dephoure N."/>
            <person name="O'Shea E.K."/>
            <person name="Weissman J.S."/>
        </authorList>
    </citation>
    <scope>LEVEL OF PROTEIN EXPRESSION [LARGE SCALE ANALYSIS]</scope>
</reference>
<reference key="6">
    <citation type="journal article" date="2006" name="Genes Dev.">
        <title>Systematic identification and functional screens of uncharacterized proteins associated with eukaryotic ribosomal complexes.</title>
        <authorList>
            <person name="Fleischer T.C."/>
            <person name="Weaver C.M."/>
            <person name="McAfee K.J."/>
            <person name="Jennings J.L."/>
            <person name="Link A.J."/>
        </authorList>
    </citation>
    <scope>IDENTIFICATION BY MASS SPECTROMETRY</scope>
</reference>
<reference key="7">
    <citation type="journal article" date="2007" name="J. Proteome Res.">
        <title>Large-scale phosphorylation analysis of alpha-factor-arrested Saccharomyces cerevisiae.</title>
        <authorList>
            <person name="Li X."/>
            <person name="Gerber S.A."/>
            <person name="Rudner A.D."/>
            <person name="Beausoleil S.A."/>
            <person name="Haas W."/>
            <person name="Villen J."/>
            <person name="Elias J.E."/>
            <person name="Gygi S.P."/>
        </authorList>
    </citation>
    <scope>PHOSPHORYLATION [LARGE SCALE ANALYSIS] AT SER-102 AND SER-277</scope>
    <scope>IDENTIFICATION BY MASS SPECTROMETRY [LARGE SCALE ANALYSIS]</scope>
    <source>
        <strain>ADR376</strain>
    </source>
</reference>
<reference key="8">
    <citation type="journal article" date="2007" name="Proc. Natl. Acad. Sci. U.S.A.">
        <title>Analysis of phosphorylation sites on proteins from Saccharomyces cerevisiae by electron transfer dissociation (ETD) mass spectrometry.</title>
        <authorList>
            <person name="Chi A."/>
            <person name="Huttenhower C."/>
            <person name="Geer L.Y."/>
            <person name="Coon J.J."/>
            <person name="Syka J.E.P."/>
            <person name="Bai D.L."/>
            <person name="Shabanowitz J."/>
            <person name="Burke D.J."/>
            <person name="Troyanskaya O.G."/>
            <person name="Hunt D.F."/>
        </authorList>
    </citation>
    <scope>PHOSPHORYLATION [LARGE SCALE ANALYSIS] AT THR-128</scope>
    <scope>IDENTIFICATION BY MASS SPECTROMETRY [LARGE SCALE ANALYSIS]</scope>
</reference>
<reference key="9">
    <citation type="journal article" date="2008" name="Mol. Biol. Cell">
        <title>Genetic and structural analysis of Hmg2p-induced endoplasmic reticulum remodeling in Saccharomyces cerevisiae.</title>
        <authorList>
            <person name="Federovitch C.M."/>
            <person name="Jones Y.Z."/>
            <person name="Tong A.H."/>
            <person name="Boone C."/>
            <person name="Prinz W.A."/>
            <person name="Hampton R.Y."/>
        </authorList>
    </citation>
    <scope>FUNCTION</scope>
</reference>
<reference key="10">
    <citation type="journal article" date="2008" name="Mol. Cell. Proteomics">
        <title>A multidimensional chromatography technology for in-depth phosphoproteome analysis.</title>
        <authorList>
            <person name="Albuquerque C.P."/>
            <person name="Smolka M.B."/>
            <person name="Payne S.H."/>
            <person name="Bafna V."/>
            <person name="Eng J."/>
            <person name="Zhou H."/>
        </authorList>
    </citation>
    <scope>PHOSPHORYLATION [LARGE SCALE ANALYSIS] AT SER-277; SER-1013 AND THR-1130</scope>
    <scope>IDENTIFICATION BY MASS SPECTROMETRY [LARGE SCALE ANALYSIS]</scope>
</reference>
<reference key="11">
    <citation type="journal article" date="2009" name="Science">
        <title>Global analysis of Cdk1 substrate phosphorylation sites provides insights into evolution.</title>
        <authorList>
            <person name="Holt L.J."/>
            <person name="Tuch B.B."/>
            <person name="Villen J."/>
            <person name="Johnson A.D."/>
            <person name="Gygi S.P."/>
            <person name="Morgan D.O."/>
        </authorList>
    </citation>
    <scope>PHOSPHORYLATION [LARGE SCALE ANALYSIS] AT SER-102; SER-277; SER-1013; SER-1200; SER-1204 AND SER-1207</scope>
    <scope>IDENTIFICATION BY MASS SPECTROMETRY [LARGE SCALE ANALYSIS]</scope>
</reference>
<evidence type="ECO:0000256" key="1">
    <source>
        <dbReference type="SAM" id="MobiDB-lite"/>
    </source>
</evidence>
<evidence type="ECO:0000269" key="2">
    <source>
    </source>
</evidence>
<evidence type="ECO:0000269" key="3">
    <source>
    </source>
</evidence>
<evidence type="ECO:0000269" key="4">
    <source>
    </source>
</evidence>
<evidence type="ECO:0000305" key="5"/>
<evidence type="ECO:0007744" key="6">
    <source>
    </source>
</evidence>
<evidence type="ECO:0007744" key="7">
    <source>
    </source>
</evidence>
<evidence type="ECO:0007744" key="8">
    <source>
    </source>
</evidence>
<evidence type="ECO:0007744" key="9">
    <source>
    </source>
</evidence>
<proteinExistence type="evidence at protein level"/>
<accession>Q12276</accession>
<accession>D6W2T1</accession>
<protein>
    <recommendedName>
        <fullName>HMG2-induced ER-remodeling protein 1</fullName>
    </recommendedName>
</protein>
<keyword id="KW-0963">Cytoplasm</keyword>
<keyword id="KW-0597">Phosphoprotein</keyword>
<keyword id="KW-1185">Reference proteome</keyword>
<feature type="chain" id="PRO_0000237668" description="HMG2-induced ER-remodeling protein 1">
    <location>
        <begin position="1"/>
        <end position="1246"/>
    </location>
</feature>
<feature type="region of interest" description="Disordered" evidence="1">
    <location>
        <begin position="19"/>
        <end position="241"/>
    </location>
</feature>
<feature type="region of interest" description="Disordered" evidence="1">
    <location>
        <begin position="263"/>
        <end position="288"/>
    </location>
</feature>
<feature type="region of interest" description="Disordered" evidence="1">
    <location>
        <begin position="816"/>
        <end position="836"/>
    </location>
</feature>
<feature type="region of interest" description="Disordered" evidence="1">
    <location>
        <begin position="1109"/>
        <end position="1157"/>
    </location>
</feature>
<feature type="region of interest" description="Disordered" evidence="1">
    <location>
        <begin position="1192"/>
        <end position="1224"/>
    </location>
</feature>
<feature type="compositionally biased region" description="Low complexity" evidence="1">
    <location>
        <begin position="27"/>
        <end position="41"/>
    </location>
</feature>
<feature type="compositionally biased region" description="Polar residues" evidence="1">
    <location>
        <begin position="58"/>
        <end position="95"/>
    </location>
</feature>
<feature type="compositionally biased region" description="Low complexity" evidence="1">
    <location>
        <begin position="154"/>
        <end position="163"/>
    </location>
</feature>
<feature type="compositionally biased region" description="Low complexity" evidence="1">
    <location>
        <begin position="211"/>
        <end position="230"/>
    </location>
</feature>
<feature type="compositionally biased region" description="Basic and acidic residues" evidence="1">
    <location>
        <begin position="271"/>
        <end position="282"/>
    </location>
</feature>
<feature type="compositionally biased region" description="Polar residues" evidence="1">
    <location>
        <begin position="1109"/>
        <end position="1133"/>
    </location>
</feature>
<feature type="compositionally biased region" description="Polar residues" evidence="1">
    <location>
        <begin position="1200"/>
        <end position="1215"/>
    </location>
</feature>
<feature type="modified residue" description="Phosphoserine" evidence="7 9">
    <location>
        <position position="102"/>
    </location>
</feature>
<feature type="modified residue" description="Phosphothreonine" evidence="6">
    <location>
        <position position="128"/>
    </location>
</feature>
<feature type="modified residue" description="Phosphoserine" evidence="7 8 9">
    <location>
        <position position="277"/>
    </location>
</feature>
<feature type="modified residue" description="Phosphoserine" evidence="8 9">
    <location>
        <position position="1013"/>
    </location>
</feature>
<feature type="modified residue" description="Phosphothreonine" evidence="8">
    <location>
        <position position="1130"/>
    </location>
</feature>
<feature type="modified residue" description="Phosphoserine" evidence="9">
    <location>
        <position position="1200"/>
    </location>
</feature>
<feature type="modified residue" description="Phosphoserine" evidence="9">
    <location>
        <position position="1204"/>
    </location>
</feature>
<feature type="modified residue" description="Phosphoserine" evidence="9">
    <location>
        <position position="1207"/>
    </location>
</feature>
<comment type="function">
    <text evidence="4">Required for HMG2-induced endoplasmic reticulum-remodeling.</text>
</comment>
<comment type="subunit">
    <text>May interact with ribosomes.</text>
</comment>
<comment type="interaction">
    <interactant intactId="EBI-35056">
        <id>Q12276</id>
    </interactant>
    <interactant intactId="EBI-13715">
        <id>P32598</id>
        <label>GLC7</label>
    </interactant>
    <organismsDiffer>false</organismsDiffer>
    <experiments>5</experiments>
</comment>
<comment type="subcellular location">
    <subcellularLocation>
        <location evidence="2">Cytoplasm</location>
    </subcellularLocation>
</comment>
<comment type="miscellaneous">
    <text evidence="3">Present with 195 molecules/cell in log phase SD medium.</text>
</comment>
<comment type="similarity">
    <text evidence="5">Belongs to the GIP3/HER1 family.</text>
</comment>
<organism>
    <name type="scientific">Saccharomyces cerevisiae (strain ATCC 204508 / S288c)</name>
    <name type="common">Baker's yeast</name>
    <dbReference type="NCBI Taxonomy" id="559292"/>
    <lineage>
        <taxon>Eukaryota</taxon>
        <taxon>Fungi</taxon>
        <taxon>Dikarya</taxon>
        <taxon>Ascomycota</taxon>
        <taxon>Saccharomycotina</taxon>
        <taxon>Saccharomycetes</taxon>
        <taxon>Saccharomycetales</taxon>
        <taxon>Saccharomycetaceae</taxon>
        <taxon>Saccharomyces</taxon>
    </lineage>
</organism>